<organism>
    <name type="scientific">Schizosaccharomyces pombe (strain 972 / ATCC 24843)</name>
    <name type="common">Fission yeast</name>
    <dbReference type="NCBI Taxonomy" id="284812"/>
    <lineage>
        <taxon>Eukaryota</taxon>
        <taxon>Fungi</taxon>
        <taxon>Dikarya</taxon>
        <taxon>Ascomycota</taxon>
        <taxon>Taphrinomycotina</taxon>
        <taxon>Schizosaccharomycetes</taxon>
        <taxon>Schizosaccharomycetales</taxon>
        <taxon>Schizosaccharomycetaceae</taxon>
        <taxon>Schizosaccharomyces</taxon>
    </lineage>
</organism>
<keyword id="KW-0256">Endoplasmic reticulum</keyword>
<keyword id="KW-0469">Meiosis</keyword>
<keyword id="KW-1185">Reference proteome</keyword>
<accession>Q9US56</accession>
<feature type="chain" id="PRO_0000278496" description="Meiotically up-regulated gene 31 protein">
    <location>
        <begin position="1"/>
        <end position="229"/>
    </location>
</feature>
<feature type="region of interest" description="Disordered" evidence="1">
    <location>
        <begin position="16"/>
        <end position="68"/>
    </location>
</feature>
<feature type="region of interest" description="Disordered" evidence="1">
    <location>
        <begin position="189"/>
        <end position="229"/>
    </location>
</feature>
<protein>
    <recommendedName>
        <fullName>Meiotically up-regulated gene 31 protein</fullName>
    </recommendedName>
</protein>
<proteinExistence type="evidence at protein level"/>
<name>MUG31_SCHPO</name>
<gene>
    <name type="primary">mug31</name>
    <name type="ORF">SPAC1002.02</name>
</gene>
<comment type="function">
    <text evidence="2">Has a role in meiosis.</text>
</comment>
<comment type="subcellular location">
    <subcellularLocation>
        <location evidence="3">Endoplasmic reticulum</location>
    </subcellularLocation>
</comment>
<sequence>MASTFSQSVFARSLYEDSAENKVDSSKNTEANFPITLPKVLPTDPKASSLHKPQEQQPNIIPSKEEDKKPVINSMKLPSIPAPGTDNINESHIPRGYWKHPAVDKIAKRLHDQAPSDRTWSRMVSNLFAFISIQFLNRYLPNTTAVKVVSWILQALLLFNLLESVWQFVRPQPTFDDLQLTPLQRKLMGLPEGGSTSGKHLTPPRYRPNFSPSRKAENVKSPVRSTTWA</sequence>
<dbReference type="EMBL" id="CU329670">
    <property type="protein sequence ID" value="CAB65602.1"/>
    <property type="molecule type" value="Genomic_DNA"/>
</dbReference>
<dbReference type="RefSeq" id="NP_593489.1">
    <property type="nucleotide sequence ID" value="NM_001018923.2"/>
</dbReference>
<dbReference type="BioGRID" id="279698">
    <property type="interactions" value="9"/>
</dbReference>
<dbReference type="FunCoup" id="Q9US56">
    <property type="interactions" value="64"/>
</dbReference>
<dbReference type="STRING" id="284812.Q9US56"/>
<dbReference type="iPTMnet" id="Q9US56"/>
<dbReference type="PaxDb" id="4896-SPAC1002.02.1"/>
<dbReference type="EnsemblFungi" id="SPAC1002.02.1">
    <property type="protein sequence ID" value="SPAC1002.02.1:pep"/>
    <property type="gene ID" value="SPAC1002.02"/>
</dbReference>
<dbReference type="GeneID" id="2543270"/>
<dbReference type="KEGG" id="spo:2543270"/>
<dbReference type="PomBase" id="SPAC1002.02"/>
<dbReference type="VEuPathDB" id="FungiDB:SPAC1002.02"/>
<dbReference type="eggNOG" id="ENOG502SEBV">
    <property type="taxonomic scope" value="Eukaryota"/>
</dbReference>
<dbReference type="HOGENOM" id="CLU_1225407_0_0_1"/>
<dbReference type="InParanoid" id="Q9US56"/>
<dbReference type="OMA" id="NILEAFW"/>
<dbReference type="PhylomeDB" id="Q9US56"/>
<dbReference type="PRO" id="PR:Q9US56"/>
<dbReference type="Proteomes" id="UP000002485">
    <property type="component" value="Chromosome I"/>
</dbReference>
<dbReference type="GO" id="GO:0005643">
    <property type="term" value="C:nuclear pore"/>
    <property type="evidence" value="ECO:0000314"/>
    <property type="project" value="PomBase"/>
</dbReference>
<dbReference type="GO" id="GO:1990578">
    <property type="term" value="C:perinuclear endoplasmic reticulum membrane"/>
    <property type="evidence" value="ECO:0007005"/>
    <property type="project" value="PomBase"/>
</dbReference>
<dbReference type="GO" id="GO:0051321">
    <property type="term" value="P:meiotic cell cycle"/>
    <property type="evidence" value="ECO:0007669"/>
    <property type="project" value="UniProtKB-KW"/>
</dbReference>
<dbReference type="GO" id="GO:0006913">
    <property type="term" value="P:nucleocytoplasmic transport"/>
    <property type="evidence" value="ECO:0000250"/>
    <property type="project" value="PomBase"/>
</dbReference>
<dbReference type="InterPro" id="IPR012578">
    <property type="entry name" value="Nucl_pore_cmplx"/>
</dbReference>
<dbReference type="PANTHER" id="PTHR28003">
    <property type="entry name" value="NUCLEOPORIN POM34"/>
    <property type="match status" value="1"/>
</dbReference>
<dbReference type="PANTHER" id="PTHR28003:SF1">
    <property type="entry name" value="NUCLEOPORIN POM34"/>
    <property type="match status" value="1"/>
</dbReference>
<dbReference type="Pfam" id="PF08058">
    <property type="entry name" value="NPCC"/>
    <property type="match status" value="1"/>
</dbReference>
<evidence type="ECO:0000256" key="1">
    <source>
        <dbReference type="SAM" id="MobiDB-lite"/>
    </source>
</evidence>
<evidence type="ECO:0000269" key="2">
    <source>
    </source>
</evidence>
<evidence type="ECO:0000269" key="3">
    <source>
    </source>
</evidence>
<reference key="1">
    <citation type="journal article" date="2002" name="Nature">
        <title>The genome sequence of Schizosaccharomyces pombe.</title>
        <authorList>
            <person name="Wood V."/>
            <person name="Gwilliam R."/>
            <person name="Rajandream M.A."/>
            <person name="Lyne M.H."/>
            <person name="Lyne R."/>
            <person name="Stewart A."/>
            <person name="Sgouros J.G."/>
            <person name="Peat N."/>
            <person name="Hayles J."/>
            <person name="Baker S.G."/>
            <person name="Basham D."/>
            <person name="Bowman S."/>
            <person name="Brooks K."/>
            <person name="Brown D."/>
            <person name="Brown S."/>
            <person name="Chillingworth T."/>
            <person name="Churcher C.M."/>
            <person name="Collins M."/>
            <person name="Connor R."/>
            <person name="Cronin A."/>
            <person name="Davis P."/>
            <person name="Feltwell T."/>
            <person name="Fraser A."/>
            <person name="Gentles S."/>
            <person name="Goble A."/>
            <person name="Hamlin N."/>
            <person name="Harris D.E."/>
            <person name="Hidalgo J."/>
            <person name="Hodgson G."/>
            <person name="Holroyd S."/>
            <person name="Hornsby T."/>
            <person name="Howarth S."/>
            <person name="Huckle E.J."/>
            <person name="Hunt S."/>
            <person name="Jagels K."/>
            <person name="James K.D."/>
            <person name="Jones L."/>
            <person name="Jones M."/>
            <person name="Leather S."/>
            <person name="McDonald S."/>
            <person name="McLean J."/>
            <person name="Mooney P."/>
            <person name="Moule S."/>
            <person name="Mungall K.L."/>
            <person name="Murphy L.D."/>
            <person name="Niblett D."/>
            <person name="Odell C."/>
            <person name="Oliver K."/>
            <person name="O'Neil S."/>
            <person name="Pearson D."/>
            <person name="Quail M.A."/>
            <person name="Rabbinowitsch E."/>
            <person name="Rutherford K.M."/>
            <person name="Rutter S."/>
            <person name="Saunders D."/>
            <person name="Seeger K."/>
            <person name="Sharp S."/>
            <person name="Skelton J."/>
            <person name="Simmonds M.N."/>
            <person name="Squares R."/>
            <person name="Squares S."/>
            <person name="Stevens K."/>
            <person name="Taylor K."/>
            <person name="Taylor R.G."/>
            <person name="Tivey A."/>
            <person name="Walsh S.V."/>
            <person name="Warren T."/>
            <person name="Whitehead S."/>
            <person name="Woodward J.R."/>
            <person name="Volckaert G."/>
            <person name="Aert R."/>
            <person name="Robben J."/>
            <person name="Grymonprez B."/>
            <person name="Weltjens I."/>
            <person name="Vanstreels E."/>
            <person name="Rieger M."/>
            <person name="Schaefer M."/>
            <person name="Mueller-Auer S."/>
            <person name="Gabel C."/>
            <person name="Fuchs M."/>
            <person name="Duesterhoeft A."/>
            <person name="Fritzc C."/>
            <person name="Holzer E."/>
            <person name="Moestl D."/>
            <person name="Hilbert H."/>
            <person name="Borzym K."/>
            <person name="Langer I."/>
            <person name="Beck A."/>
            <person name="Lehrach H."/>
            <person name="Reinhardt R."/>
            <person name="Pohl T.M."/>
            <person name="Eger P."/>
            <person name="Zimmermann W."/>
            <person name="Wedler H."/>
            <person name="Wambutt R."/>
            <person name="Purnelle B."/>
            <person name="Goffeau A."/>
            <person name="Cadieu E."/>
            <person name="Dreano S."/>
            <person name="Gloux S."/>
            <person name="Lelaure V."/>
            <person name="Mottier S."/>
            <person name="Galibert F."/>
            <person name="Aves S.J."/>
            <person name="Xiang Z."/>
            <person name="Hunt C."/>
            <person name="Moore K."/>
            <person name="Hurst S.M."/>
            <person name="Lucas M."/>
            <person name="Rochet M."/>
            <person name="Gaillardin C."/>
            <person name="Tallada V.A."/>
            <person name="Garzon A."/>
            <person name="Thode G."/>
            <person name="Daga R.R."/>
            <person name="Cruzado L."/>
            <person name="Jimenez J."/>
            <person name="Sanchez M."/>
            <person name="del Rey F."/>
            <person name="Benito J."/>
            <person name="Dominguez A."/>
            <person name="Revuelta J.L."/>
            <person name="Moreno S."/>
            <person name="Armstrong J."/>
            <person name="Forsburg S.L."/>
            <person name="Cerutti L."/>
            <person name="Lowe T."/>
            <person name="McCombie W.R."/>
            <person name="Paulsen I."/>
            <person name="Potashkin J."/>
            <person name="Shpakovski G.V."/>
            <person name="Ussery D."/>
            <person name="Barrell B.G."/>
            <person name="Nurse P."/>
        </authorList>
    </citation>
    <scope>NUCLEOTIDE SEQUENCE [LARGE SCALE GENOMIC DNA]</scope>
    <source>
        <strain>972 / ATCC 24843</strain>
    </source>
</reference>
<reference key="2">
    <citation type="journal article" date="2005" name="Curr. Biol.">
        <title>A large-scale screen in S. pombe identifies seven novel genes required for critical meiotic events.</title>
        <authorList>
            <person name="Martin-Castellanos C."/>
            <person name="Blanco M."/>
            <person name="Rozalen A.E."/>
            <person name="Perez-Hidalgo L."/>
            <person name="Garcia A.I."/>
            <person name="Conde F."/>
            <person name="Mata J."/>
            <person name="Ellermeier C."/>
            <person name="Davis L."/>
            <person name="San-Segundo P."/>
            <person name="Smith G.R."/>
            <person name="Moreno S."/>
        </authorList>
    </citation>
    <scope>FUNCTION IN MEIOSIS</scope>
</reference>
<reference key="3">
    <citation type="journal article" date="2006" name="Nat. Biotechnol.">
        <title>ORFeome cloning and global analysis of protein localization in the fission yeast Schizosaccharomyces pombe.</title>
        <authorList>
            <person name="Matsuyama A."/>
            <person name="Arai R."/>
            <person name="Yashiroda Y."/>
            <person name="Shirai A."/>
            <person name="Kamata A."/>
            <person name="Sekido S."/>
            <person name="Kobayashi Y."/>
            <person name="Hashimoto A."/>
            <person name="Hamamoto M."/>
            <person name="Hiraoka Y."/>
            <person name="Horinouchi S."/>
            <person name="Yoshida M."/>
        </authorList>
    </citation>
    <scope>SUBCELLULAR LOCATION [LARGE SCALE ANALYSIS]</scope>
</reference>